<sequence>MTLLYEGKAKRIFSTNQENELRVEYKDEVTAGNGAKKDTMAGKGRLNNQITSIIFKYLQENGIESHFIKQLSETEQLVKPVKIIPLEVVVRNIASGSITKRLGFENGEVFREPLVEFFYKNDALNDPLITDDHIKLLNIATDKDIETLKTKALEINQVLKQLMHAMSLKLVDFKIEFGKTETGQILLADEISPDTCRIWDKATNANFDKDVYRNNTGSLIETYQIFLNKLEDLK</sequence>
<reference key="1">
    <citation type="journal article" date="2004" name="Proc. Natl. Acad. Sci. U.S.A.">
        <title>Complete genomes of two clinical Staphylococcus aureus strains: evidence for the rapid evolution of virulence and drug resistance.</title>
        <authorList>
            <person name="Holden M.T.G."/>
            <person name="Feil E.J."/>
            <person name="Lindsay J.A."/>
            <person name="Peacock S.J."/>
            <person name="Day N.P.J."/>
            <person name="Enright M.C."/>
            <person name="Foster T.J."/>
            <person name="Moore C.E."/>
            <person name="Hurst L."/>
            <person name="Atkin R."/>
            <person name="Barron A."/>
            <person name="Bason N."/>
            <person name="Bentley S.D."/>
            <person name="Chillingworth C."/>
            <person name="Chillingworth T."/>
            <person name="Churcher C."/>
            <person name="Clark L."/>
            <person name="Corton C."/>
            <person name="Cronin A."/>
            <person name="Doggett J."/>
            <person name="Dowd L."/>
            <person name="Feltwell T."/>
            <person name="Hance Z."/>
            <person name="Harris B."/>
            <person name="Hauser H."/>
            <person name="Holroyd S."/>
            <person name="Jagels K."/>
            <person name="James K.D."/>
            <person name="Lennard N."/>
            <person name="Line A."/>
            <person name="Mayes R."/>
            <person name="Moule S."/>
            <person name="Mungall K."/>
            <person name="Ormond D."/>
            <person name="Quail M.A."/>
            <person name="Rabbinowitsch E."/>
            <person name="Rutherford K.M."/>
            <person name="Sanders M."/>
            <person name="Sharp S."/>
            <person name="Simmonds M."/>
            <person name="Stevens K."/>
            <person name="Whitehead S."/>
            <person name="Barrell B.G."/>
            <person name="Spratt B.G."/>
            <person name="Parkhill J."/>
        </authorList>
    </citation>
    <scope>NUCLEOTIDE SEQUENCE [LARGE SCALE GENOMIC DNA]</scope>
    <source>
        <strain>MRSA252</strain>
    </source>
</reference>
<dbReference type="EC" id="6.3.2.6" evidence="1"/>
<dbReference type="EMBL" id="BX571856">
    <property type="protein sequence ID" value="CAG40043.1"/>
    <property type="molecule type" value="Genomic_DNA"/>
</dbReference>
<dbReference type="RefSeq" id="WP_000174051.1">
    <property type="nucleotide sequence ID" value="NC_002952.2"/>
</dbReference>
<dbReference type="SMR" id="Q6GI18"/>
<dbReference type="KEGG" id="sar:SAR1040"/>
<dbReference type="HOGENOM" id="CLU_061495_2_0_9"/>
<dbReference type="UniPathway" id="UPA00074">
    <property type="reaction ID" value="UER00131"/>
</dbReference>
<dbReference type="Proteomes" id="UP000000596">
    <property type="component" value="Chromosome"/>
</dbReference>
<dbReference type="GO" id="GO:0005524">
    <property type="term" value="F:ATP binding"/>
    <property type="evidence" value="ECO:0007669"/>
    <property type="project" value="UniProtKB-KW"/>
</dbReference>
<dbReference type="GO" id="GO:0004639">
    <property type="term" value="F:phosphoribosylaminoimidazolesuccinocarboxamide synthase activity"/>
    <property type="evidence" value="ECO:0007669"/>
    <property type="project" value="UniProtKB-UniRule"/>
</dbReference>
<dbReference type="GO" id="GO:0006189">
    <property type="term" value="P:'de novo' IMP biosynthetic process"/>
    <property type="evidence" value="ECO:0007669"/>
    <property type="project" value="UniProtKB-UniRule"/>
</dbReference>
<dbReference type="GO" id="GO:0009236">
    <property type="term" value="P:cobalamin biosynthetic process"/>
    <property type="evidence" value="ECO:0007669"/>
    <property type="project" value="InterPro"/>
</dbReference>
<dbReference type="CDD" id="cd01415">
    <property type="entry name" value="SAICAR_synt_PurC"/>
    <property type="match status" value="1"/>
</dbReference>
<dbReference type="FunFam" id="3.30.200.20:FF:000189">
    <property type="entry name" value="Phosphoribosylaminoimidazole-succinocarboxamide synthase"/>
    <property type="match status" value="1"/>
</dbReference>
<dbReference type="FunFam" id="3.30.470.20:FF:000006">
    <property type="entry name" value="Phosphoribosylaminoimidazole-succinocarboxamide synthase"/>
    <property type="match status" value="1"/>
</dbReference>
<dbReference type="Gene3D" id="3.30.470.20">
    <property type="entry name" value="ATP-grasp fold, B domain"/>
    <property type="match status" value="1"/>
</dbReference>
<dbReference type="Gene3D" id="3.30.200.20">
    <property type="entry name" value="Phosphorylase Kinase, domain 1"/>
    <property type="match status" value="1"/>
</dbReference>
<dbReference type="HAMAP" id="MF_00137">
    <property type="entry name" value="SAICAR_synth"/>
    <property type="match status" value="1"/>
</dbReference>
<dbReference type="InterPro" id="IPR028923">
    <property type="entry name" value="SAICAR_synt/ADE2_N"/>
</dbReference>
<dbReference type="InterPro" id="IPR033934">
    <property type="entry name" value="SAICAR_synt_PurC"/>
</dbReference>
<dbReference type="InterPro" id="IPR001636">
    <property type="entry name" value="SAICAR_synth"/>
</dbReference>
<dbReference type="InterPro" id="IPR050089">
    <property type="entry name" value="SAICAR_synthetase"/>
</dbReference>
<dbReference type="InterPro" id="IPR018236">
    <property type="entry name" value="SAICAR_synthetase_CS"/>
</dbReference>
<dbReference type="NCBIfam" id="TIGR00081">
    <property type="entry name" value="purC"/>
    <property type="match status" value="1"/>
</dbReference>
<dbReference type="PANTHER" id="PTHR43599">
    <property type="entry name" value="MULTIFUNCTIONAL PROTEIN ADE2"/>
    <property type="match status" value="1"/>
</dbReference>
<dbReference type="PANTHER" id="PTHR43599:SF3">
    <property type="entry name" value="SI:DKEY-6E2.2"/>
    <property type="match status" value="1"/>
</dbReference>
<dbReference type="Pfam" id="PF01259">
    <property type="entry name" value="SAICAR_synt"/>
    <property type="match status" value="1"/>
</dbReference>
<dbReference type="SUPFAM" id="SSF56104">
    <property type="entry name" value="SAICAR synthase-like"/>
    <property type="match status" value="1"/>
</dbReference>
<dbReference type="PROSITE" id="PS01057">
    <property type="entry name" value="SAICAR_SYNTHETASE_1"/>
    <property type="match status" value="1"/>
</dbReference>
<dbReference type="PROSITE" id="PS01058">
    <property type="entry name" value="SAICAR_SYNTHETASE_2"/>
    <property type="match status" value="1"/>
</dbReference>
<proteinExistence type="inferred from homology"/>
<comment type="catalytic activity">
    <reaction evidence="1">
        <text>5-amino-1-(5-phospho-D-ribosyl)imidazole-4-carboxylate + L-aspartate + ATP = (2S)-2-[5-amino-1-(5-phospho-beta-D-ribosyl)imidazole-4-carboxamido]succinate + ADP + phosphate + 2 H(+)</text>
        <dbReference type="Rhea" id="RHEA:22628"/>
        <dbReference type="ChEBI" id="CHEBI:15378"/>
        <dbReference type="ChEBI" id="CHEBI:29991"/>
        <dbReference type="ChEBI" id="CHEBI:30616"/>
        <dbReference type="ChEBI" id="CHEBI:43474"/>
        <dbReference type="ChEBI" id="CHEBI:58443"/>
        <dbReference type="ChEBI" id="CHEBI:77657"/>
        <dbReference type="ChEBI" id="CHEBI:456216"/>
        <dbReference type="EC" id="6.3.2.6"/>
    </reaction>
</comment>
<comment type="pathway">
    <text evidence="1">Purine metabolism; IMP biosynthesis via de novo pathway; 5-amino-1-(5-phospho-D-ribosyl)imidazole-4-carboxamide from 5-amino-1-(5-phospho-D-ribosyl)imidazole-4-carboxylate: step 1/2.</text>
</comment>
<comment type="similarity">
    <text evidence="1">Belongs to the SAICAR synthetase family.</text>
</comment>
<keyword id="KW-0067">ATP-binding</keyword>
<keyword id="KW-0436">Ligase</keyword>
<keyword id="KW-0547">Nucleotide-binding</keyword>
<keyword id="KW-0658">Purine biosynthesis</keyword>
<accession>Q6GI18</accession>
<gene>
    <name evidence="1" type="primary">purC</name>
    <name type="ordered locus">SAR1040</name>
</gene>
<name>PUR7_STAAR</name>
<organism>
    <name type="scientific">Staphylococcus aureus (strain MRSA252)</name>
    <dbReference type="NCBI Taxonomy" id="282458"/>
    <lineage>
        <taxon>Bacteria</taxon>
        <taxon>Bacillati</taxon>
        <taxon>Bacillota</taxon>
        <taxon>Bacilli</taxon>
        <taxon>Bacillales</taxon>
        <taxon>Staphylococcaceae</taxon>
        <taxon>Staphylococcus</taxon>
    </lineage>
</organism>
<protein>
    <recommendedName>
        <fullName evidence="1">Phosphoribosylaminoimidazole-succinocarboxamide synthase</fullName>
        <ecNumber evidence="1">6.3.2.6</ecNumber>
    </recommendedName>
    <alternativeName>
        <fullName evidence="1">SAICAR synthetase</fullName>
    </alternativeName>
</protein>
<feature type="chain" id="PRO_0000100872" description="Phosphoribosylaminoimidazole-succinocarboxamide synthase">
    <location>
        <begin position="1"/>
        <end position="234"/>
    </location>
</feature>
<evidence type="ECO:0000255" key="1">
    <source>
        <dbReference type="HAMAP-Rule" id="MF_00137"/>
    </source>
</evidence>